<evidence type="ECO:0000255" key="1">
    <source>
        <dbReference type="HAMAP-Rule" id="MF_01321"/>
    </source>
</evidence>
<evidence type="ECO:0000256" key="2">
    <source>
        <dbReference type="SAM" id="MobiDB-lite"/>
    </source>
</evidence>
<sequence>MTQLAVPSPAAPTLPDLVEIQRESFLWFLREGFEEELLSFSPIVDYTGKLELHFLPEYRPGDPSKGYKINKPRYDPEEAKRRDATYQAQIRVPTRLINKETGEIKDMDVFIGELPLMTDRGTFIINGAERVIVNQIVRSPGVYYKSELDKNGRRTYSASLIPNRGAWLKFETDKNGLVWVRIDKTRKLSAAVLLKALGLSDSEIYDSLRHPEFFQKTMEKEGHYSEEEALMELYRKLRPGEPPTVSGGQQLLESRFFDPKRYDLGRVGRYKLNKKLNLNVAENVRVLTVTDILAVIDYLINLEYDIGHVDDIDHLGNRRVRSVGELLQNQVRVGLNRLERIIRERMTVSESENLTPASLVNPKPLVAAIKEFFGSSQLSQFMDQTNPLAELTHKRRLSALGPGGLSRERAGFAVRDIHPSHYGRICPIETPEGPNAGLIGSLATHARVNQYGFIESPYYRVENGVVRKDLGMVYLTADEEDEYRVAPGDVPVDAEGRITADLVPVRYRQEFTTAHPSEVHYVQVSPVQLISVATSLIPFLEHDDANRALMGANMQRQAVPLLKPDRPYVGTGLEAQAARDSGMVVVSRTSGVVTYVSADEIVVRPDDGGDPIVYRLQKYQRSNQDTCLNQRPLVYAGDRVVPGQVLADGPATEGGELALGQNVLVAYMPWEGYNYEDAILISERLVYDDVFTSVHIEKYEIEARQTKLGPEEITREIPNVGEDALRNLDENGIVRIGAWVEAGDILVGKVTPKGESDQPPEERLLRAIFGEKARDVRDNSLRVPNGERGRVVDVRIFTREQGDELPPGANMVVRVYIALKRKIQVGDKIAGRHGNKGIISRILPIEDMPYLADGTPVDVVLNPLGVPSRMNVGQVYECLLGWAAEHLGVRFKLMPFDEMHGLEASRLTVEAKLREAREKTGKDWIFNPEGKYCGKIQVFDGRTGEPFDQPVTVGRAYMLKLVHLVDDKIHARSTGPYSLVTQQPLGGKAQQGGQRFGEMEVWALEAFGAAYILQELLTVKSDDMVGRNEALNAIVKGKPIPRPGTPESFKVLVRELQSLCLDVSVHKVEVDSDGQTRDVEVDLMADVSSRHTPSRPTYESVTSEDLSPAAGGTFTLARRSREEDEDREEEDDF</sequence>
<proteinExistence type="inferred from homology"/>
<reference key="1">
    <citation type="journal article" date="2007" name="ISME J.">
        <title>Population level functional diversity in a microbial community revealed by comparative genomic and metagenomic analyses.</title>
        <authorList>
            <person name="Bhaya D."/>
            <person name="Grossman A.R."/>
            <person name="Steunou A.-S."/>
            <person name="Khuri N."/>
            <person name="Cohan F.M."/>
            <person name="Hamamura N."/>
            <person name="Melendrez M.C."/>
            <person name="Bateson M.M."/>
            <person name="Ward D.M."/>
            <person name="Heidelberg J.F."/>
        </authorList>
    </citation>
    <scope>NUCLEOTIDE SEQUENCE [LARGE SCALE GENOMIC DNA]</scope>
    <source>
        <strain>JA-3-3Ab</strain>
    </source>
</reference>
<accession>Q2JX64</accession>
<feature type="chain" id="PRO_0000237319" description="DNA-directed RNA polymerase subunit beta">
    <location>
        <begin position="1"/>
        <end position="1133"/>
    </location>
</feature>
<feature type="region of interest" description="Disordered" evidence="2">
    <location>
        <begin position="1085"/>
        <end position="1133"/>
    </location>
</feature>
<feature type="compositionally biased region" description="Polar residues" evidence="2">
    <location>
        <begin position="1090"/>
        <end position="1105"/>
    </location>
</feature>
<feature type="compositionally biased region" description="Acidic residues" evidence="2">
    <location>
        <begin position="1123"/>
        <end position="1133"/>
    </location>
</feature>
<name>RPOB_SYNJA</name>
<dbReference type="EC" id="2.7.7.6" evidence="1"/>
<dbReference type="EMBL" id="CP000239">
    <property type="protein sequence ID" value="ABC98628.1"/>
    <property type="molecule type" value="Genomic_DNA"/>
</dbReference>
<dbReference type="RefSeq" id="WP_011429317.1">
    <property type="nucleotide sequence ID" value="NC_007775.1"/>
</dbReference>
<dbReference type="SMR" id="Q2JX64"/>
<dbReference type="STRING" id="321327.CYA_0409"/>
<dbReference type="KEGG" id="cya:CYA_0409"/>
<dbReference type="eggNOG" id="COG0085">
    <property type="taxonomic scope" value="Bacteria"/>
</dbReference>
<dbReference type="HOGENOM" id="CLU_000524_4_1_3"/>
<dbReference type="OrthoDB" id="9803954at2"/>
<dbReference type="Proteomes" id="UP000008818">
    <property type="component" value="Chromosome"/>
</dbReference>
<dbReference type="GO" id="GO:0000428">
    <property type="term" value="C:DNA-directed RNA polymerase complex"/>
    <property type="evidence" value="ECO:0007669"/>
    <property type="project" value="UniProtKB-KW"/>
</dbReference>
<dbReference type="GO" id="GO:0003677">
    <property type="term" value="F:DNA binding"/>
    <property type="evidence" value="ECO:0007669"/>
    <property type="project" value="UniProtKB-UniRule"/>
</dbReference>
<dbReference type="GO" id="GO:0003899">
    <property type="term" value="F:DNA-directed RNA polymerase activity"/>
    <property type="evidence" value="ECO:0007669"/>
    <property type="project" value="UniProtKB-UniRule"/>
</dbReference>
<dbReference type="GO" id="GO:0032549">
    <property type="term" value="F:ribonucleoside binding"/>
    <property type="evidence" value="ECO:0007669"/>
    <property type="project" value="InterPro"/>
</dbReference>
<dbReference type="GO" id="GO:0006351">
    <property type="term" value="P:DNA-templated transcription"/>
    <property type="evidence" value="ECO:0007669"/>
    <property type="project" value="UniProtKB-UniRule"/>
</dbReference>
<dbReference type="CDD" id="cd00653">
    <property type="entry name" value="RNA_pol_B_RPB2"/>
    <property type="match status" value="1"/>
</dbReference>
<dbReference type="FunFam" id="3.90.1800.10:FF:000001">
    <property type="entry name" value="DNA-directed RNA polymerase subunit beta"/>
    <property type="match status" value="1"/>
</dbReference>
<dbReference type="Gene3D" id="2.40.50.100">
    <property type="match status" value="1"/>
</dbReference>
<dbReference type="Gene3D" id="2.40.50.150">
    <property type="match status" value="1"/>
</dbReference>
<dbReference type="Gene3D" id="3.90.1100.10">
    <property type="match status" value="1"/>
</dbReference>
<dbReference type="Gene3D" id="2.30.150.10">
    <property type="entry name" value="DNA-directed RNA polymerase, beta subunit, external 1 domain"/>
    <property type="match status" value="1"/>
</dbReference>
<dbReference type="Gene3D" id="2.40.270.10">
    <property type="entry name" value="DNA-directed RNA polymerase, subunit 2, domain 6"/>
    <property type="match status" value="1"/>
</dbReference>
<dbReference type="Gene3D" id="3.90.1800.10">
    <property type="entry name" value="RNA polymerase alpha subunit dimerisation domain"/>
    <property type="match status" value="1"/>
</dbReference>
<dbReference type="Gene3D" id="3.90.1110.10">
    <property type="entry name" value="RNA polymerase Rpb2, domain 2"/>
    <property type="match status" value="1"/>
</dbReference>
<dbReference type="HAMAP" id="MF_01321">
    <property type="entry name" value="RNApol_bact_RpoB"/>
    <property type="match status" value="1"/>
</dbReference>
<dbReference type="InterPro" id="IPR042107">
    <property type="entry name" value="DNA-dir_RNA_pol_bsu_ext_1_sf"/>
</dbReference>
<dbReference type="InterPro" id="IPR019462">
    <property type="entry name" value="DNA-dir_RNA_pol_bsu_external_1"/>
</dbReference>
<dbReference type="InterPro" id="IPR015712">
    <property type="entry name" value="DNA-dir_RNA_pol_su2"/>
</dbReference>
<dbReference type="InterPro" id="IPR007120">
    <property type="entry name" value="DNA-dir_RNAP_su2_dom"/>
</dbReference>
<dbReference type="InterPro" id="IPR037033">
    <property type="entry name" value="DNA-dir_RNAP_su2_hyb_sf"/>
</dbReference>
<dbReference type="InterPro" id="IPR010243">
    <property type="entry name" value="RNA_pol_bsu_bac"/>
</dbReference>
<dbReference type="InterPro" id="IPR007121">
    <property type="entry name" value="RNA_pol_bsu_CS"/>
</dbReference>
<dbReference type="InterPro" id="IPR007644">
    <property type="entry name" value="RNA_pol_bsu_protrusion"/>
</dbReference>
<dbReference type="InterPro" id="IPR007642">
    <property type="entry name" value="RNA_pol_Rpb2_2"/>
</dbReference>
<dbReference type="InterPro" id="IPR037034">
    <property type="entry name" value="RNA_pol_Rpb2_2_sf"/>
</dbReference>
<dbReference type="InterPro" id="IPR007645">
    <property type="entry name" value="RNA_pol_Rpb2_3"/>
</dbReference>
<dbReference type="InterPro" id="IPR007641">
    <property type="entry name" value="RNA_pol_Rpb2_7"/>
</dbReference>
<dbReference type="InterPro" id="IPR014724">
    <property type="entry name" value="RNA_pol_RPB2_OB-fold"/>
</dbReference>
<dbReference type="NCBIfam" id="NF001616">
    <property type="entry name" value="PRK00405.1"/>
    <property type="match status" value="1"/>
</dbReference>
<dbReference type="NCBIfam" id="TIGR02013">
    <property type="entry name" value="rpoB"/>
    <property type="match status" value="1"/>
</dbReference>
<dbReference type="PANTHER" id="PTHR20856">
    <property type="entry name" value="DNA-DIRECTED RNA POLYMERASE I SUBUNIT 2"/>
    <property type="match status" value="1"/>
</dbReference>
<dbReference type="Pfam" id="PF04563">
    <property type="entry name" value="RNA_pol_Rpb2_1"/>
    <property type="match status" value="1"/>
</dbReference>
<dbReference type="Pfam" id="PF04561">
    <property type="entry name" value="RNA_pol_Rpb2_2"/>
    <property type="match status" value="1"/>
</dbReference>
<dbReference type="Pfam" id="PF04565">
    <property type="entry name" value="RNA_pol_Rpb2_3"/>
    <property type="match status" value="1"/>
</dbReference>
<dbReference type="Pfam" id="PF10385">
    <property type="entry name" value="RNA_pol_Rpb2_45"/>
    <property type="match status" value="1"/>
</dbReference>
<dbReference type="Pfam" id="PF00562">
    <property type="entry name" value="RNA_pol_Rpb2_6"/>
    <property type="match status" value="1"/>
</dbReference>
<dbReference type="Pfam" id="PF04560">
    <property type="entry name" value="RNA_pol_Rpb2_7"/>
    <property type="match status" value="1"/>
</dbReference>
<dbReference type="SUPFAM" id="SSF64484">
    <property type="entry name" value="beta and beta-prime subunits of DNA dependent RNA-polymerase"/>
    <property type="match status" value="1"/>
</dbReference>
<dbReference type="PROSITE" id="PS01166">
    <property type="entry name" value="RNA_POL_BETA"/>
    <property type="match status" value="1"/>
</dbReference>
<comment type="function">
    <text evidence="1">DNA-dependent RNA polymerase catalyzes the transcription of DNA into RNA using the four ribonucleoside triphosphates as substrates.</text>
</comment>
<comment type="catalytic activity">
    <reaction evidence="1">
        <text>RNA(n) + a ribonucleoside 5'-triphosphate = RNA(n+1) + diphosphate</text>
        <dbReference type="Rhea" id="RHEA:21248"/>
        <dbReference type="Rhea" id="RHEA-COMP:14527"/>
        <dbReference type="Rhea" id="RHEA-COMP:17342"/>
        <dbReference type="ChEBI" id="CHEBI:33019"/>
        <dbReference type="ChEBI" id="CHEBI:61557"/>
        <dbReference type="ChEBI" id="CHEBI:140395"/>
        <dbReference type="EC" id="2.7.7.6"/>
    </reaction>
</comment>
<comment type="subunit">
    <text evidence="1">In cyanobacteria the RNAP catalytic core is composed of 2 alpha, 1 beta, 1 beta', 1 gamma and 1 omega subunit. When a sigma factor is associated with the core the holoenzyme is formed, which can initiate transcription.</text>
</comment>
<comment type="similarity">
    <text evidence="1">Belongs to the RNA polymerase beta chain family.</text>
</comment>
<gene>
    <name evidence="1" type="primary">rpoB</name>
    <name type="ordered locus">CYA_0409</name>
</gene>
<protein>
    <recommendedName>
        <fullName evidence="1">DNA-directed RNA polymerase subunit beta</fullName>
        <shortName evidence="1">RNAP subunit beta</shortName>
        <ecNumber evidence="1">2.7.7.6</ecNumber>
    </recommendedName>
    <alternativeName>
        <fullName evidence="1">RNA polymerase subunit beta</fullName>
    </alternativeName>
    <alternativeName>
        <fullName evidence="1">Transcriptase subunit beta</fullName>
    </alternativeName>
</protein>
<keyword id="KW-0240">DNA-directed RNA polymerase</keyword>
<keyword id="KW-0548">Nucleotidyltransferase</keyword>
<keyword id="KW-0804">Transcription</keyword>
<keyword id="KW-0808">Transferase</keyword>
<organism>
    <name type="scientific">Synechococcus sp. (strain JA-3-3Ab)</name>
    <name type="common">Cyanobacteria bacterium Yellowstone A-Prime</name>
    <dbReference type="NCBI Taxonomy" id="321327"/>
    <lineage>
        <taxon>Bacteria</taxon>
        <taxon>Bacillati</taxon>
        <taxon>Cyanobacteriota</taxon>
        <taxon>Cyanophyceae</taxon>
        <taxon>Synechococcales</taxon>
        <taxon>Synechococcaceae</taxon>
        <taxon>Synechococcus</taxon>
    </lineage>
</organism>